<comment type="function">
    <text evidence="1">Together with its co-chaperonin GroES, plays an essential role in assisting protein folding. The GroEL-GroES system forms a nano-cage that allows encapsulation of the non-native substrate proteins and provides a physical environment optimized to promote and accelerate protein folding.</text>
</comment>
<comment type="catalytic activity">
    <reaction evidence="1">
        <text>ATP + H2O + a folded polypeptide = ADP + phosphate + an unfolded polypeptide.</text>
        <dbReference type="EC" id="5.6.1.7"/>
    </reaction>
</comment>
<comment type="subunit">
    <text evidence="1">Forms a cylinder of 14 subunits composed of two heptameric rings stacked back-to-back. Interacts with the co-chaperonin GroES.</text>
</comment>
<comment type="subcellular location">
    <subcellularLocation>
        <location evidence="1">Cytoplasm</location>
    </subcellularLocation>
</comment>
<comment type="similarity">
    <text evidence="1">Belongs to the chaperonin (HSP60) family.</text>
</comment>
<gene>
    <name evidence="1" type="primary">groEL</name>
    <name evidence="1" type="synonym">groL</name>
    <name type="ordered locus">YE0354</name>
</gene>
<accession>A1JIP3</accession>
<name>CH60_YERE8</name>
<protein>
    <recommendedName>
        <fullName evidence="1">Chaperonin GroEL</fullName>
        <ecNumber evidence="1">5.6.1.7</ecNumber>
    </recommendedName>
    <alternativeName>
        <fullName evidence="1">60 kDa chaperonin</fullName>
    </alternativeName>
    <alternativeName>
        <fullName evidence="1">Chaperonin-60</fullName>
        <shortName evidence="1">Cpn60</shortName>
    </alternativeName>
</protein>
<proteinExistence type="inferred from homology"/>
<sequence>MAAKDVKFGNDARIKMLRGVNILADAVKVTLGPKGRNVVLDKSFGSPTITKDGVSVAREIELEDKFENMGAQMVKEVASKANDAAGDGTTTATVLAQSIITEGLKAVAAGMNPMDLKRGIDKAVIAAVEELKKLSVPCSDSKAIAQVGTISANSDSTVGELIAQAMEKVGKEGVITVEEGSGLQDELDVVEGMQFDRGYLSPYFINKPETGSIELESPFILLADKKISNIREMLPVLEAVAKAGKPLLIIAEDVEGEALATLVVNTMRGIVKVAAVKAPGFGDRRKAMLQDIATLTAGTVISEEIGLELEKTTLEDLGQAKRVVINKDTTIIIDGVGDEAAIQGRVAQIRQQIEDATSDYDKEKLQERVAKLAGGVAVIKVGAATEVEMKEKKARVEDALHATRAAVEEGVVAGGGVALIRAASAITAAGLKGDNEDQNVGIKVALRAMESPLRQIVVNAGEEASVIANNVKAGSGSYGYNAYSEEYGDMIAMGILDPTKVTRSALQYAASIAGLMITTECMITDLPRDDKGADMGAGGMGGMGGMGGMM</sequence>
<reference key="1">
    <citation type="journal article" date="2006" name="PLoS Genet.">
        <title>The complete genome sequence and comparative genome analysis of the high pathogenicity Yersinia enterocolitica strain 8081.</title>
        <authorList>
            <person name="Thomson N.R."/>
            <person name="Howard S."/>
            <person name="Wren B.W."/>
            <person name="Holden M.T.G."/>
            <person name="Crossman L."/>
            <person name="Challis G.L."/>
            <person name="Churcher C."/>
            <person name="Mungall K."/>
            <person name="Brooks K."/>
            <person name="Chillingworth T."/>
            <person name="Feltwell T."/>
            <person name="Abdellah Z."/>
            <person name="Hauser H."/>
            <person name="Jagels K."/>
            <person name="Maddison M."/>
            <person name="Moule S."/>
            <person name="Sanders M."/>
            <person name="Whitehead S."/>
            <person name="Quail M.A."/>
            <person name="Dougan G."/>
            <person name="Parkhill J."/>
            <person name="Prentice M.B."/>
        </authorList>
    </citation>
    <scope>NUCLEOTIDE SEQUENCE [LARGE SCALE GENOMIC DNA]</scope>
    <source>
        <strain>NCTC 13174 / 8081</strain>
    </source>
</reference>
<dbReference type="EC" id="5.6.1.7" evidence="1"/>
<dbReference type="EMBL" id="AM286415">
    <property type="protein sequence ID" value="CAL10484.1"/>
    <property type="molecule type" value="Genomic_DNA"/>
</dbReference>
<dbReference type="RefSeq" id="WP_005175567.1">
    <property type="nucleotide sequence ID" value="NC_008800.1"/>
</dbReference>
<dbReference type="RefSeq" id="YP_001004730.1">
    <property type="nucleotide sequence ID" value="NC_008800.1"/>
</dbReference>
<dbReference type="SMR" id="A1JIP3"/>
<dbReference type="KEGG" id="yen:YE0354"/>
<dbReference type="PATRIC" id="fig|393305.7.peg.449"/>
<dbReference type="eggNOG" id="COG0459">
    <property type="taxonomic scope" value="Bacteria"/>
</dbReference>
<dbReference type="HOGENOM" id="CLU_016503_3_0_6"/>
<dbReference type="OrthoDB" id="9766614at2"/>
<dbReference type="Proteomes" id="UP000000642">
    <property type="component" value="Chromosome"/>
</dbReference>
<dbReference type="GO" id="GO:0005737">
    <property type="term" value="C:cytoplasm"/>
    <property type="evidence" value="ECO:0007669"/>
    <property type="project" value="UniProtKB-SubCell"/>
</dbReference>
<dbReference type="GO" id="GO:0005524">
    <property type="term" value="F:ATP binding"/>
    <property type="evidence" value="ECO:0007669"/>
    <property type="project" value="UniProtKB-UniRule"/>
</dbReference>
<dbReference type="GO" id="GO:0140662">
    <property type="term" value="F:ATP-dependent protein folding chaperone"/>
    <property type="evidence" value="ECO:0007669"/>
    <property type="project" value="InterPro"/>
</dbReference>
<dbReference type="GO" id="GO:0016853">
    <property type="term" value="F:isomerase activity"/>
    <property type="evidence" value="ECO:0007669"/>
    <property type="project" value="UniProtKB-KW"/>
</dbReference>
<dbReference type="GO" id="GO:0051082">
    <property type="term" value="F:unfolded protein binding"/>
    <property type="evidence" value="ECO:0007669"/>
    <property type="project" value="UniProtKB-UniRule"/>
</dbReference>
<dbReference type="GO" id="GO:0042026">
    <property type="term" value="P:protein refolding"/>
    <property type="evidence" value="ECO:0007669"/>
    <property type="project" value="UniProtKB-UniRule"/>
</dbReference>
<dbReference type="CDD" id="cd03344">
    <property type="entry name" value="GroEL"/>
    <property type="match status" value="1"/>
</dbReference>
<dbReference type="FunFam" id="1.10.560.10:FF:000001">
    <property type="entry name" value="60 kDa chaperonin"/>
    <property type="match status" value="1"/>
</dbReference>
<dbReference type="FunFam" id="3.50.7.10:FF:000001">
    <property type="entry name" value="60 kDa chaperonin"/>
    <property type="match status" value="1"/>
</dbReference>
<dbReference type="Gene3D" id="3.50.7.10">
    <property type="entry name" value="GroEL"/>
    <property type="match status" value="1"/>
</dbReference>
<dbReference type="Gene3D" id="1.10.560.10">
    <property type="entry name" value="GroEL-like equatorial domain"/>
    <property type="match status" value="1"/>
</dbReference>
<dbReference type="Gene3D" id="3.30.260.10">
    <property type="entry name" value="TCP-1-like chaperonin intermediate domain"/>
    <property type="match status" value="1"/>
</dbReference>
<dbReference type="HAMAP" id="MF_00600">
    <property type="entry name" value="CH60"/>
    <property type="match status" value="1"/>
</dbReference>
<dbReference type="InterPro" id="IPR018370">
    <property type="entry name" value="Chaperonin_Cpn60_CS"/>
</dbReference>
<dbReference type="InterPro" id="IPR001844">
    <property type="entry name" value="Cpn60/GroEL"/>
</dbReference>
<dbReference type="InterPro" id="IPR002423">
    <property type="entry name" value="Cpn60/GroEL/TCP-1"/>
</dbReference>
<dbReference type="InterPro" id="IPR027409">
    <property type="entry name" value="GroEL-like_apical_dom_sf"/>
</dbReference>
<dbReference type="InterPro" id="IPR027413">
    <property type="entry name" value="GROEL-like_equatorial_sf"/>
</dbReference>
<dbReference type="InterPro" id="IPR027410">
    <property type="entry name" value="TCP-1-like_intermed_sf"/>
</dbReference>
<dbReference type="NCBIfam" id="TIGR02348">
    <property type="entry name" value="GroEL"/>
    <property type="match status" value="1"/>
</dbReference>
<dbReference type="NCBIfam" id="NF000592">
    <property type="entry name" value="PRK00013.1"/>
    <property type="match status" value="1"/>
</dbReference>
<dbReference type="NCBIfam" id="NF009487">
    <property type="entry name" value="PRK12849.1"/>
    <property type="match status" value="1"/>
</dbReference>
<dbReference type="NCBIfam" id="NF009488">
    <property type="entry name" value="PRK12850.1"/>
    <property type="match status" value="1"/>
</dbReference>
<dbReference type="NCBIfam" id="NF009489">
    <property type="entry name" value="PRK12851.1"/>
    <property type="match status" value="1"/>
</dbReference>
<dbReference type="PANTHER" id="PTHR45633">
    <property type="entry name" value="60 KDA HEAT SHOCK PROTEIN, MITOCHONDRIAL"/>
    <property type="match status" value="1"/>
</dbReference>
<dbReference type="Pfam" id="PF00118">
    <property type="entry name" value="Cpn60_TCP1"/>
    <property type="match status" value="1"/>
</dbReference>
<dbReference type="PRINTS" id="PR00298">
    <property type="entry name" value="CHAPERONIN60"/>
</dbReference>
<dbReference type="SUPFAM" id="SSF52029">
    <property type="entry name" value="GroEL apical domain-like"/>
    <property type="match status" value="1"/>
</dbReference>
<dbReference type="SUPFAM" id="SSF48592">
    <property type="entry name" value="GroEL equatorial domain-like"/>
    <property type="match status" value="1"/>
</dbReference>
<dbReference type="SUPFAM" id="SSF54849">
    <property type="entry name" value="GroEL-intermediate domain like"/>
    <property type="match status" value="1"/>
</dbReference>
<dbReference type="PROSITE" id="PS00296">
    <property type="entry name" value="CHAPERONINS_CPN60"/>
    <property type="match status" value="1"/>
</dbReference>
<feature type="chain" id="PRO_1000025849" description="Chaperonin GroEL">
    <location>
        <begin position="1"/>
        <end position="550"/>
    </location>
</feature>
<feature type="binding site" evidence="1">
    <location>
        <begin position="30"/>
        <end position="33"/>
    </location>
    <ligand>
        <name>ATP</name>
        <dbReference type="ChEBI" id="CHEBI:30616"/>
    </ligand>
</feature>
<feature type="binding site" evidence="1">
    <location>
        <position position="51"/>
    </location>
    <ligand>
        <name>ATP</name>
        <dbReference type="ChEBI" id="CHEBI:30616"/>
    </ligand>
</feature>
<feature type="binding site" evidence="1">
    <location>
        <begin position="87"/>
        <end position="91"/>
    </location>
    <ligand>
        <name>ATP</name>
        <dbReference type="ChEBI" id="CHEBI:30616"/>
    </ligand>
</feature>
<feature type="binding site" evidence="1">
    <location>
        <position position="415"/>
    </location>
    <ligand>
        <name>ATP</name>
        <dbReference type="ChEBI" id="CHEBI:30616"/>
    </ligand>
</feature>
<feature type="binding site" evidence="1">
    <location>
        <position position="497"/>
    </location>
    <ligand>
        <name>ATP</name>
        <dbReference type="ChEBI" id="CHEBI:30616"/>
    </ligand>
</feature>
<organism>
    <name type="scientific">Yersinia enterocolitica serotype O:8 / biotype 1B (strain NCTC 13174 / 8081)</name>
    <dbReference type="NCBI Taxonomy" id="393305"/>
    <lineage>
        <taxon>Bacteria</taxon>
        <taxon>Pseudomonadati</taxon>
        <taxon>Pseudomonadota</taxon>
        <taxon>Gammaproteobacteria</taxon>
        <taxon>Enterobacterales</taxon>
        <taxon>Yersiniaceae</taxon>
        <taxon>Yersinia</taxon>
    </lineage>
</organism>
<evidence type="ECO:0000255" key="1">
    <source>
        <dbReference type="HAMAP-Rule" id="MF_00600"/>
    </source>
</evidence>
<keyword id="KW-0067">ATP-binding</keyword>
<keyword id="KW-0143">Chaperone</keyword>
<keyword id="KW-0963">Cytoplasm</keyword>
<keyword id="KW-0413">Isomerase</keyword>
<keyword id="KW-0547">Nucleotide-binding</keyword>